<protein>
    <recommendedName>
        <fullName evidence="1">ATP-dependent protease subunit HslV</fullName>
        <ecNumber evidence="1">3.4.25.2</ecNumber>
    </recommendedName>
</protein>
<proteinExistence type="inferred from homology"/>
<organism>
    <name type="scientific">Bacillus cereus (strain G9842)</name>
    <dbReference type="NCBI Taxonomy" id="405531"/>
    <lineage>
        <taxon>Bacteria</taxon>
        <taxon>Bacillati</taxon>
        <taxon>Bacillota</taxon>
        <taxon>Bacilli</taxon>
        <taxon>Bacillales</taxon>
        <taxon>Bacillaceae</taxon>
        <taxon>Bacillus</taxon>
        <taxon>Bacillus cereus group</taxon>
    </lineage>
</organism>
<dbReference type="EC" id="3.4.25.2" evidence="1"/>
<dbReference type="EMBL" id="CP001186">
    <property type="protein sequence ID" value="ACK96782.1"/>
    <property type="molecule type" value="Genomic_DNA"/>
</dbReference>
<dbReference type="RefSeq" id="WP_000526274.1">
    <property type="nucleotide sequence ID" value="NC_011772.1"/>
</dbReference>
<dbReference type="SMR" id="B7IUI9"/>
<dbReference type="MEROPS" id="T01.007"/>
<dbReference type="GeneID" id="72450509"/>
<dbReference type="KEGG" id="bcg:BCG9842_B1315"/>
<dbReference type="HOGENOM" id="CLU_093872_1_0_9"/>
<dbReference type="Proteomes" id="UP000006744">
    <property type="component" value="Chromosome"/>
</dbReference>
<dbReference type="GO" id="GO:0009376">
    <property type="term" value="C:HslUV protease complex"/>
    <property type="evidence" value="ECO:0007669"/>
    <property type="project" value="UniProtKB-UniRule"/>
</dbReference>
<dbReference type="GO" id="GO:0005839">
    <property type="term" value="C:proteasome core complex"/>
    <property type="evidence" value="ECO:0007669"/>
    <property type="project" value="InterPro"/>
</dbReference>
<dbReference type="GO" id="GO:0046872">
    <property type="term" value="F:metal ion binding"/>
    <property type="evidence" value="ECO:0007669"/>
    <property type="project" value="UniProtKB-KW"/>
</dbReference>
<dbReference type="GO" id="GO:0004298">
    <property type="term" value="F:threonine-type endopeptidase activity"/>
    <property type="evidence" value="ECO:0007669"/>
    <property type="project" value="UniProtKB-KW"/>
</dbReference>
<dbReference type="GO" id="GO:0051603">
    <property type="term" value="P:proteolysis involved in protein catabolic process"/>
    <property type="evidence" value="ECO:0007669"/>
    <property type="project" value="InterPro"/>
</dbReference>
<dbReference type="CDD" id="cd01913">
    <property type="entry name" value="protease_HslV"/>
    <property type="match status" value="1"/>
</dbReference>
<dbReference type="Gene3D" id="3.60.20.10">
    <property type="entry name" value="Glutamine Phosphoribosylpyrophosphate, subunit 1, domain 1"/>
    <property type="match status" value="1"/>
</dbReference>
<dbReference type="HAMAP" id="MF_00248">
    <property type="entry name" value="HslV"/>
    <property type="match status" value="1"/>
</dbReference>
<dbReference type="InterPro" id="IPR022281">
    <property type="entry name" value="ATP-dep_Prtase_HsIV_su"/>
</dbReference>
<dbReference type="InterPro" id="IPR029055">
    <property type="entry name" value="Ntn_hydrolases_N"/>
</dbReference>
<dbReference type="InterPro" id="IPR001353">
    <property type="entry name" value="Proteasome_sua/b"/>
</dbReference>
<dbReference type="InterPro" id="IPR023333">
    <property type="entry name" value="Proteasome_suB-type"/>
</dbReference>
<dbReference type="NCBIfam" id="TIGR03692">
    <property type="entry name" value="ATP_dep_HslV"/>
    <property type="match status" value="1"/>
</dbReference>
<dbReference type="NCBIfam" id="NF003964">
    <property type="entry name" value="PRK05456.1"/>
    <property type="match status" value="1"/>
</dbReference>
<dbReference type="PANTHER" id="PTHR32194:SF0">
    <property type="entry name" value="ATP-DEPENDENT PROTEASE SUBUNIT HSLV"/>
    <property type="match status" value="1"/>
</dbReference>
<dbReference type="PANTHER" id="PTHR32194">
    <property type="entry name" value="METALLOPROTEASE TLDD"/>
    <property type="match status" value="1"/>
</dbReference>
<dbReference type="Pfam" id="PF00227">
    <property type="entry name" value="Proteasome"/>
    <property type="match status" value="1"/>
</dbReference>
<dbReference type="PIRSF" id="PIRSF039093">
    <property type="entry name" value="HslV"/>
    <property type="match status" value="1"/>
</dbReference>
<dbReference type="SUPFAM" id="SSF56235">
    <property type="entry name" value="N-terminal nucleophile aminohydrolases (Ntn hydrolases)"/>
    <property type="match status" value="1"/>
</dbReference>
<dbReference type="PROSITE" id="PS51476">
    <property type="entry name" value="PROTEASOME_BETA_2"/>
    <property type="match status" value="1"/>
</dbReference>
<accession>B7IUI9</accession>
<evidence type="ECO:0000255" key="1">
    <source>
        <dbReference type="HAMAP-Rule" id="MF_00248"/>
    </source>
</evidence>
<gene>
    <name evidence="1" type="primary">hslV</name>
    <name type="ordered locus">BCG9842_B1315</name>
</gene>
<feature type="chain" id="PRO_1000192673" description="ATP-dependent protease subunit HslV">
    <location>
        <begin position="1"/>
        <end position="180"/>
    </location>
</feature>
<feature type="active site" evidence="1">
    <location>
        <position position="7"/>
    </location>
</feature>
<feature type="binding site" evidence="1">
    <location>
        <position position="165"/>
    </location>
    <ligand>
        <name>Na(+)</name>
        <dbReference type="ChEBI" id="CHEBI:29101"/>
    </ligand>
</feature>
<feature type="binding site" evidence="1">
    <location>
        <position position="168"/>
    </location>
    <ligand>
        <name>Na(+)</name>
        <dbReference type="ChEBI" id="CHEBI:29101"/>
    </ligand>
</feature>
<feature type="binding site" evidence="1">
    <location>
        <position position="171"/>
    </location>
    <ligand>
        <name>Na(+)</name>
        <dbReference type="ChEBI" id="CHEBI:29101"/>
    </ligand>
</feature>
<name>HSLV_BACC2</name>
<keyword id="KW-0021">Allosteric enzyme</keyword>
<keyword id="KW-0963">Cytoplasm</keyword>
<keyword id="KW-0378">Hydrolase</keyword>
<keyword id="KW-0479">Metal-binding</keyword>
<keyword id="KW-0645">Protease</keyword>
<keyword id="KW-0915">Sodium</keyword>
<keyword id="KW-0888">Threonine protease</keyword>
<reference key="1">
    <citation type="submission" date="2008-10" db="EMBL/GenBank/DDBJ databases">
        <title>Genome sequence of Bacillus cereus G9842.</title>
        <authorList>
            <person name="Dodson R.J."/>
            <person name="Durkin A.S."/>
            <person name="Rosovitz M.J."/>
            <person name="Rasko D.A."/>
            <person name="Hoffmaster A."/>
            <person name="Ravel J."/>
            <person name="Sutton G."/>
        </authorList>
    </citation>
    <scope>NUCLEOTIDE SEQUENCE [LARGE SCALE GENOMIC DNA]</scope>
    <source>
        <strain>G9842</strain>
    </source>
</reference>
<comment type="function">
    <text evidence="1">Protease subunit of a proteasome-like degradation complex believed to be a general protein degrading machinery.</text>
</comment>
<comment type="catalytic activity">
    <reaction evidence="1">
        <text>ATP-dependent cleavage of peptide bonds with broad specificity.</text>
        <dbReference type="EC" id="3.4.25.2"/>
    </reaction>
</comment>
<comment type="activity regulation">
    <text evidence="1">Allosterically activated by HslU binding.</text>
</comment>
<comment type="subunit">
    <text evidence="1">A double ring-shaped homohexamer of HslV is capped on each side by a ring-shaped HslU homohexamer. The assembly of the HslU/HslV complex is dependent on binding of ATP.</text>
</comment>
<comment type="subcellular location">
    <subcellularLocation>
        <location evidence="1">Cytoplasm</location>
    </subcellularLocation>
</comment>
<comment type="similarity">
    <text evidence="1">Belongs to the peptidase T1B family. HslV subfamily.</text>
</comment>
<sequence>MGNFHATTIFAVHHNGECAMAGDGQVTMGNAVVMKHTARKVRRLFQGKVLAGFAGSVADAFTLFEMFEGKLEEYNGNLQRAAVEMAKQWRGDKMLRQLEAMLIVMDKTTMLLVSGTGEVIEPDDGILAIGSGGNYALSAGRALKQYASEHLTAKQIAKASLEIAGDICVYTNHNIIVEEL</sequence>